<sequence>MAYNPKILQKPKEGEEITIKDNKLHVPNHPIIPFIEGDGIGSDITPAMIKVVDSAVQKAYKGEKKIAWYEVFVGEKCYQKFKDYKELSPEEQWLLPDTIEAINHYKVSIKGPLTTPIGEGFRSLNVALRQKMDLYVCLRPVRWYGSPSPVKEPQKVDMVIFRENSEDIYAGIEWQEGSAEAKKLIHFLQNELKVKKIRFPESSGIGVKPISKEGTERLVRKAIEYAIDNDKPSVTFVHKGNIMKYTEGAFMKWGYALAQKEFNAQVIDKGPWCSLKNPKNGKEIIIKDMIADAFLQQILLRPSEYSVIATMNLNGDYISDALAAMVGGIGIAPGANLNDTVGMFEATHGTAPKYAGLDKVNPGSIILSAEMMLRHMGWVEAADLIVSAMEKAIKSKKVTYDFARLMDGAKEVKCSEFASVMIENM</sequence>
<dbReference type="EC" id="1.1.1.42" evidence="1"/>
<dbReference type="EMBL" id="AE000511">
    <property type="protein sequence ID" value="AAD07098.1"/>
    <property type="molecule type" value="Genomic_DNA"/>
</dbReference>
<dbReference type="PIR" id="C64523">
    <property type="entry name" value="C64523"/>
</dbReference>
<dbReference type="RefSeq" id="NP_206829.1">
    <property type="nucleotide sequence ID" value="NC_000915.1"/>
</dbReference>
<dbReference type="RefSeq" id="WP_000323988.1">
    <property type="nucleotide sequence ID" value="NC_018939.1"/>
</dbReference>
<dbReference type="SMR" id="P56063"/>
<dbReference type="DIP" id="DIP-3724N"/>
<dbReference type="FunCoup" id="P56063">
    <property type="interactions" value="293"/>
</dbReference>
<dbReference type="IntAct" id="P56063">
    <property type="interactions" value="2"/>
</dbReference>
<dbReference type="MINT" id="P56063"/>
<dbReference type="STRING" id="85962.HP_0027"/>
<dbReference type="PaxDb" id="85962-C694_00125"/>
<dbReference type="EnsemblBacteria" id="AAD07098">
    <property type="protein sequence ID" value="AAD07098"/>
    <property type="gene ID" value="HP_0027"/>
</dbReference>
<dbReference type="KEGG" id="heo:C694_00125"/>
<dbReference type="KEGG" id="hpy:HP_0027"/>
<dbReference type="PATRIC" id="fig|85962.47.peg.28"/>
<dbReference type="eggNOG" id="COG0538">
    <property type="taxonomic scope" value="Bacteria"/>
</dbReference>
<dbReference type="InParanoid" id="P56063"/>
<dbReference type="OrthoDB" id="9806254at2"/>
<dbReference type="PhylomeDB" id="P56063"/>
<dbReference type="SABIO-RK" id="P56063"/>
<dbReference type="Proteomes" id="UP000000429">
    <property type="component" value="Chromosome"/>
</dbReference>
<dbReference type="GO" id="GO:0004450">
    <property type="term" value="F:isocitrate dehydrogenase (NADP+) activity"/>
    <property type="evidence" value="ECO:0007669"/>
    <property type="project" value="UniProtKB-EC"/>
</dbReference>
<dbReference type="GO" id="GO:0000287">
    <property type="term" value="F:magnesium ion binding"/>
    <property type="evidence" value="ECO:0007669"/>
    <property type="project" value="InterPro"/>
</dbReference>
<dbReference type="GO" id="GO:0051287">
    <property type="term" value="F:NAD binding"/>
    <property type="evidence" value="ECO:0007669"/>
    <property type="project" value="InterPro"/>
</dbReference>
<dbReference type="GO" id="GO:0006097">
    <property type="term" value="P:glyoxylate cycle"/>
    <property type="evidence" value="ECO:0007669"/>
    <property type="project" value="UniProtKB-KW"/>
</dbReference>
<dbReference type="GO" id="GO:0006099">
    <property type="term" value="P:tricarboxylic acid cycle"/>
    <property type="evidence" value="ECO:0007669"/>
    <property type="project" value="UniProtKB-KW"/>
</dbReference>
<dbReference type="Gene3D" id="3.40.718.10">
    <property type="entry name" value="Isopropylmalate Dehydrogenase"/>
    <property type="match status" value="1"/>
</dbReference>
<dbReference type="InterPro" id="IPR019818">
    <property type="entry name" value="IsoCit/isopropylmalate_DH_CS"/>
</dbReference>
<dbReference type="InterPro" id="IPR004439">
    <property type="entry name" value="Isocitrate_DH_NADP_dimer_prok"/>
</dbReference>
<dbReference type="InterPro" id="IPR024084">
    <property type="entry name" value="IsoPropMal-DH-like_dom"/>
</dbReference>
<dbReference type="NCBIfam" id="NF005425">
    <property type="entry name" value="PRK07006.1"/>
    <property type="match status" value="1"/>
</dbReference>
<dbReference type="NCBIfam" id="TIGR00183">
    <property type="entry name" value="prok_nadp_idh"/>
    <property type="match status" value="1"/>
</dbReference>
<dbReference type="PANTHER" id="PTHR43504">
    <property type="entry name" value="ISOCITRATE DEHYDROGENASE [NADP]"/>
    <property type="match status" value="1"/>
</dbReference>
<dbReference type="PANTHER" id="PTHR43504:SF1">
    <property type="entry name" value="ISOCITRATE DEHYDROGENASE [NADP]"/>
    <property type="match status" value="1"/>
</dbReference>
<dbReference type="Pfam" id="PF00180">
    <property type="entry name" value="Iso_dh"/>
    <property type="match status" value="1"/>
</dbReference>
<dbReference type="SMART" id="SM01329">
    <property type="entry name" value="Iso_dh"/>
    <property type="match status" value="1"/>
</dbReference>
<dbReference type="SUPFAM" id="SSF53659">
    <property type="entry name" value="Isocitrate/Isopropylmalate dehydrogenase-like"/>
    <property type="match status" value="1"/>
</dbReference>
<dbReference type="PROSITE" id="PS00470">
    <property type="entry name" value="IDH_IMDH"/>
    <property type="match status" value="1"/>
</dbReference>
<proteinExistence type="inferred from homology"/>
<organism>
    <name type="scientific">Helicobacter pylori (strain ATCC 700392 / 26695)</name>
    <name type="common">Campylobacter pylori</name>
    <dbReference type="NCBI Taxonomy" id="85962"/>
    <lineage>
        <taxon>Bacteria</taxon>
        <taxon>Pseudomonadati</taxon>
        <taxon>Campylobacterota</taxon>
        <taxon>Epsilonproteobacteria</taxon>
        <taxon>Campylobacterales</taxon>
        <taxon>Helicobacteraceae</taxon>
        <taxon>Helicobacter</taxon>
    </lineage>
</organism>
<comment type="function">
    <text evidence="1">Catalyzes the oxidative decarboxylation of isocitrate to 2-oxoglutarate and carbon dioxide with the concomitant reduction of NADP(+).</text>
</comment>
<comment type="catalytic activity">
    <reaction evidence="1">
        <text>D-threo-isocitrate + NADP(+) = 2-oxoglutarate + CO2 + NADPH</text>
        <dbReference type="Rhea" id="RHEA:19629"/>
        <dbReference type="ChEBI" id="CHEBI:15562"/>
        <dbReference type="ChEBI" id="CHEBI:16526"/>
        <dbReference type="ChEBI" id="CHEBI:16810"/>
        <dbReference type="ChEBI" id="CHEBI:57783"/>
        <dbReference type="ChEBI" id="CHEBI:58349"/>
        <dbReference type="EC" id="1.1.1.42"/>
    </reaction>
</comment>
<comment type="cofactor">
    <cofactor evidence="1">
        <name>Mg(2+)</name>
        <dbReference type="ChEBI" id="CHEBI:18420"/>
    </cofactor>
    <cofactor evidence="1">
        <name>Mn(2+)</name>
        <dbReference type="ChEBI" id="CHEBI:29035"/>
    </cofactor>
    <text evidence="1">Binds 1 Mg(2+) or Mn(2+) ion per subunit.</text>
</comment>
<comment type="subunit">
    <text evidence="1">Homodimer.</text>
</comment>
<comment type="similarity">
    <text evidence="2">Belongs to the isocitrate and isopropylmalate dehydrogenases family.</text>
</comment>
<reference key="1">
    <citation type="journal article" date="1997" name="Nature">
        <title>The complete genome sequence of the gastric pathogen Helicobacter pylori.</title>
        <authorList>
            <person name="Tomb J.-F."/>
            <person name="White O."/>
            <person name="Kerlavage A.R."/>
            <person name="Clayton R.A."/>
            <person name="Sutton G.G."/>
            <person name="Fleischmann R.D."/>
            <person name="Ketchum K.A."/>
            <person name="Klenk H.-P."/>
            <person name="Gill S.R."/>
            <person name="Dougherty B.A."/>
            <person name="Nelson K.E."/>
            <person name="Quackenbush J."/>
            <person name="Zhou L."/>
            <person name="Kirkness E.F."/>
            <person name="Peterson S.N."/>
            <person name="Loftus B.J."/>
            <person name="Richardson D.L."/>
            <person name="Dodson R.J."/>
            <person name="Khalak H.G."/>
            <person name="Glodek A."/>
            <person name="McKenney K."/>
            <person name="FitzGerald L.M."/>
            <person name="Lee N."/>
            <person name="Adams M.D."/>
            <person name="Hickey E.K."/>
            <person name="Berg D.E."/>
            <person name="Gocayne J.D."/>
            <person name="Utterback T.R."/>
            <person name="Peterson J.D."/>
            <person name="Kelley J.M."/>
            <person name="Cotton M.D."/>
            <person name="Weidman J.F."/>
            <person name="Fujii C."/>
            <person name="Bowman C."/>
            <person name="Watthey L."/>
            <person name="Wallin E."/>
            <person name="Hayes W.S."/>
            <person name="Borodovsky M."/>
            <person name="Karp P.D."/>
            <person name="Smith H.O."/>
            <person name="Fraser C.M."/>
            <person name="Venter J.C."/>
        </authorList>
    </citation>
    <scope>NUCLEOTIDE SEQUENCE [LARGE SCALE GENOMIC DNA]</scope>
    <source>
        <strain>ATCC 700392 / 26695</strain>
    </source>
</reference>
<accession>P56063</accession>
<feature type="chain" id="PRO_0000083552" description="Isocitrate dehydrogenase [NADP]">
    <location>
        <begin position="1"/>
        <end position="425"/>
    </location>
</feature>
<feature type="binding site" evidence="1">
    <location>
        <position position="114"/>
    </location>
    <ligand>
        <name>NADP(+)</name>
        <dbReference type="ChEBI" id="CHEBI:58349"/>
    </ligand>
</feature>
<feature type="binding site" evidence="1">
    <location>
        <position position="123"/>
    </location>
    <ligand>
        <name>D-threo-isocitrate</name>
        <dbReference type="ChEBI" id="CHEBI:15562"/>
    </ligand>
</feature>
<feature type="binding site" evidence="1">
    <location>
        <position position="125"/>
    </location>
    <ligand>
        <name>D-threo-isocitrate</name>
        <dbReference type="ChEBI" id="CHEBI:15562"/>
    </ligand>
</feature>
<feature type="binding site" evidence="1">
    <location>
        <position position="129"/>
    </location>
    <ligand>
        <name>D-threo-isocitrate</name>
        <dbReference type="ChEBI" id="CHEBI:15562"/>
    </ligand>
</feature>
<feature type="binding site" evidence="1">
    <location>
        <position position="139"/>
    </location>
    <ligand>
        <name>D-threo-isocitrate</name>
        <dbReference type="ChEBI" id="CHEBI:15562"/>
    </ligand>
</feature>
<feature type="binding site" evidence="1">
    <location>
        <position position="162"/>
    </location>
    <ligand>
        <name>D-threo-isocitrate</name>
        <dbReference type="ChEBI" id="CHEBI:15562"/>
    </ligand>
</feature>
<feature type="binding site" evidence="1">
    <location>
        <position position="316"/>
    </location>
    <ligand>
        <name>Mg(2+)</name>
        <dbReference type="ChEBI" id="CHEBI:18420"/>
    </ligand>
</feature>
<feature type="binding site" evidence="1">
    <location>
        <begin position="348"/>
        <end position="354"/>
    </location>
    <ligand>
        <name>NADP(+)</name>
        <dbReference type="ChEBI" id="CHEBI:58349"/>
    </ligand>
</feature>
<feature type="binding site" evidence="1">
    <location>
        <position position="361"/>
    </location>
    <ligand>
        <name>NADP(+)</name>
        <dbReference type="ChEBI" id="CHEBI:58349"/>
    </ligand>
</feature>
<feature type="binding site" evidence="1">
    <location>
        <position position="400"/>
    </location>
    <ligand>
        <name>NADP(+)</name>
        <dbReference type="ChEBI" id="CHEBI:58349"/>
    </ligand>
</feature>
<feature type="binding site" evidence="1">
    <location>
        <position position="404"/>
    </location>
    <ligand>
        <name>NADP(+)</name>
        <dbReference type="ChEBI" id="CHEBI:58349"/>
    </ligand>
</feature>
<feature type="site" description="Critical for catalysis" evidence="1">
    <location>
        <position position="169"/>
    </location>
</feature>
<feature type="site" description="Critical for catalysis" evidence="1">
    <location>
        <position position="239"/>
    </location>
</feature>
<gene>
    <name type="primary">icd</name>
    <name type="ordered locus">HP_0027</name>
</gene>
<keyword id="KW-0329">Glyoxylate bypass</keyword>
<keyword id="KW-0460">Magnesium</keyword>
<keyword id="KW-0464">Manganese</keyword>
<keyword id="KW-0479">Metal-binding</keyword>
<keyword id="KW-0521">NADP</keyword>
<keyword id="KW-0560">Oxidoreductase</keyword>
<keyword id="KW-1185">Reference proteome</keyword>
<keyword id="KW-0816">Tricarboxylic acid cycle</keyword>
<evidence type="ECO:0000250" key="1">
    <source>
        <dbReference type="UniProtKB" id="P08200"/>
    </source>
</evidence>
<evidence type="ECO:0000305" key="2"/>
<name>IDH_HELPY</name>
<protein>
    <recommendedName>
        <fullName>Isocitrate dehydrogenase [NADP]</fullName>
        <shortName>IDH</shortName>
        <ecNumber evidence="1">1.1.1.42</ecNumber>
    </recommendedName>
    <alternativeName>
        <fullName>IDP</fullName>
    </alternativeName>
    <alternativeName>
        <fullName>NADP(+)-specific ICDH</fullName>
    </alternativeName>
    <alternativeName>
        <fullName>Oxalosuccinate decarboxylase</fullName>
    </alternativeName>
</protein>